<reference key="1">
    <citation type="submission" date="2002-02" db="EMBL/GenBank/DDBJ databases">
        <title>The correction of one single point mutation in EP402R homolog gene of the non-hemadsorbing ASFV strain NH/P68, is enough to rescue the hemadsorption phenotype.</title>
        <authorList>
            <person name="Duarte M.M.D."/>
            <person name="Rodrigues-Pousada C."/>
            <person name="Cruz M.B.T.P."/>
            <person name="Fevereiro M."/>
        </authorList>
    </citation>
    <scope>NUCLEOTIDE SEQUENCE [GENOMIC DNA]</scope>
    <source>
        <strain>Lisbon60</strain>
        <strain>NH/P68</strain>
    </source>
</reference>
<reference key="2">
    <citation type="journal article" date="1995" name="Virology">
        <title>Analysis of the complete nucleotide sequence of African swine fever virus.</title>
        <authorList>
            <person name="Yanez R.J."/>
            <person name="Rodriguez J.M."/>
            <person name="Nogal M.L."/>
            <person name="Yuste L."/>
            <person name="Enriquez C."/>
            <person name="Rodriguez J.F."/>
            <person name="Vinuela E."/>
        </authorList>
    </citation>
    <scope>NUCLEOTIDE SEQUENCE [LARGE SCALE GENOMIC DNA]</scope>
</reference>
<reference key="3">
    <citation type="journal article" date="2018" name="J. Virol.">
        <title>A Proteomic Atlas of the African Swine Fever Virus Particle.</title>
        <authorList>
            <person name="Alejo A."/>
            <person name="Matamoros T."/>
            <person name="Guerra M."/>
            <person name="Andres G."/>
        </authorList>
    </citation>
    <scope>SUBCELLULAR LOCATION</scope>
</reference>
<keyword id="KW-1185">Reference proteome</keyword>
<keyword id="KW-0732">Signal</keyword>
<keyword id="KW-0946">Virion</keyword>
<organismHost>
    <name type="scientific">Ornithodoros</name>
    <name type="common">relapsing fever ticks</name>
    <dbReference type="NCBI Taxonomy" id="6937"/>
</organismHost>
<organismHost>
    <name type="scientific">Sus scrofa</name>
    <name type="common">Pig</name>
    <dbReference type="NCBI Taxonomy" id="9823"/>
</organismHost>
<proteinExistence type="inferred from homology"/>
<sequence length="152" mass="17734">MYSILIACLVLLLCLVIYVGHRADHARKYLEGMWHGDPVFLKQSGLQSFYLYIQPGHTCFFSIVNKNGEKLMETKIPCTITNKIYMFFKPIFEFHVVMEDIHRYLPKQFNFLLDSAEGKLILENNHVIYAVLYKDNFATALGKTVEKYITQN</sequence>
<comment type="subcellular location">
    <subcellularLocation>
        <location evidence="2">Virion</location>
    </subcellularLocation>
</comment>
<comment type="similarity">
    <text evidence="3">Belongs to the asfivirus EP152R family.</text>
</comment>
<evidence type="ECO:0000255" key="1"/>
<evidence type="ECO:0000269" key="2">
    <source>
    </source>
</evidence>
<evidence type="ECO:0000305" key="3"/>
<dbReference type="EMBL" id="AF481875">
    <property type="protein sequence ID" value="AAM90849.1"/>
    <property type="molecule type" value="Genomic_DNA"/>
</dbReference>
<dbReference type="EMBL" id="AF481876">
    <property type="protein sequence ID" value="AAM90852.1"/>
    <property type="molecule type" value="Genomic_DNA"/>
</dbReference>
<dbReference type="EMBL" id="U18466">
    <property type="protein sequence ID" value="AAA65286.1"/>
    <property type="molecule type" value="Genomic_DNA"/>
</dbReference>
<dbReference type="RefSeq" id="NP_042750.1">
    <property type="nucleotide sequence ID" value="NC_001659.2"/>
</dbReference>
<dbReference type="GeneID" id="22220438"/>
<dbReference type="KEGG" id="vg:22220438"/>
<dbReference type="Proteomes" id="UP000000624">
    <property type="component" value="Segment"/>
</dbReference>
<dbReference type="GO" id="GO:0044423">
    <property type="term" value="C:virion component"/>
    <property type="evidence" value="ECO:0007669"/>
    <property type="project" value="UniProtKB-KW"/>
</dbReference>
<gene>
    <name type="ordered locus">Ba71V-056</name>
    <name type="ORF">EP152R</name>
</gene>
<feature type="signal peptide" evidence="1">
    <location>
        <begin position="1"/>
        <end position="23"/>
    </location>
</feature>
<feature type="chain" id="PRO_0000373534" description="Uncharacterized protein EP152R">
    <location>
        <begin position="24"/>
        <end position="152"/>
    </location>
</feature>
<accession>Q65149</accession>
<organism>
    <name type="scientific">African swine fever virus (strain Badajoz 1971 Vero-adapted)</name>
    <name type="common">Ba71V</name>
    <name type="synonym">ASFV</name>
    <dbReference type="NCBI Taxonomy" id="10498"/>
    <lineage>
        <taxon>Viruses</taxon>
        <taxon>Varidnaviria</taxon>
        <taxon>Bamfordvirae</taxon>
        <taxon>Nucleocytoviricota</taxon>
        <taxon>Pokkesviricetes</taxon>
        <taxon>Asfuvirales</taxon>
        <taxon>Asfarviridae</taxon>
        <taxon>Asfivirus</taxon>
        <taxon>African swine fever virus</taxon>
    </lineage>
</organism>
<name>VF152_ASFB7</name>
<protein>
    <recommendedName>
        <fullName>Uncharacterized protein EP152R</fullName>
        <shortName>pEP152R</shortName>
    </recommendedName>
</protein>